<organism>
    <name type="scientific">Sus scrofa</name>
    <name type="common">Pig</name>
    <dbReference type="NCBI Taxonomy" id="9823"/>
    <lineage>
        <taxon>Eukaryota</taxon>
        <taxon>Metazoa</taxon>
        <taxon>Chordata</taxon>
        <taxon>Craniata</taxon>
        <taxon>Vertebrata</taxon>
        <taxon>Euteleostomi</taxon>
        <taxon>Mammalia</taxon>
        <taxon>Eutheria</taxon>
        <taxon>Laurasiatheria</taxon>
        <taxon>Artiodactyla</taxon>
        <taxon>Suina</taxon>
        <taxon>Suidae</taxon>
        <taxon>Sus</taxon>
    </lineage>
</organism>
<dbReference type="EMBL" id="L38849">
    <property type="protein sequence ID" value="AAA99424.1"/>
    <property type="molecule type" value="mRNA"/>
</dbReference>
<dbReference type="RefSeq" id="NP_999427.1">
    <property type="nucleotide sequence ID" value="NM_214262.1"/>
</dbReference>
<dbReference type="SMR" id="Q29056"/>
<dbReference type="FunCoup" id="Q29056">
    <property type="interactions" value="129"/>
</dbReference>
<dbReference type="GlyCosmos" id="Q29056">
    <property type="glycosylation" value="1 site, No reported glycans"/>
</dbReference>
<dbReference type="GlyGen" id="Q29056">
    <property type="glycosylation" value="2 sites"/>
</dbReference>
<dbReference type="PeptideAtlas" id="Q29056"/>
<dbReference type="GeneID" id="397499"/>
<dbReference type="CTD" id="3557"/>
<dbReference type="InParanoid" id="Q29056"/>
<dbReference type="Proteomes" id="UP000008227">
    <property type="component" value="Unplaced"/>
</dbReference>
<dbReference type="Proteomes" id="UP000314985">
    <property type="component" value="Unplaced"/>
</dbReference>
<dbReference type="Proteomes" id="UP000694570">
    <property type="component" value="Unplaced"/>
</dbReference>
<dbReference type="Proteomes" id="UP000694571">
    <property type="component" value="Unplaced"/>
</dbReference>
<dbReference type="Proteomes" id="UP000694720">
    <property type="component" value="Unplaced"/>
</dbReference>
<dbReference type="Proteomes" id="UP000694722">
    <property type="component" value="Unplaced"/>
</dbReference>
<dbReference type="Proteomes" id="UP000694723">
    <property type="component" value="Unplaced"/>
</dbReference>
<dbReference type="Proteomes" id="UP000694724">
    <property type="component" value="Unplaced"/>
</dbReference>
<dbReference type="Proteomes" id="UP000694725">
    <property type="component" value="Unplaced"/>
</dbReference>
<dbReference type="Proteomes" id="UP000694726">
    <property type="component" value="Unplaced"/>
</dbReference>
<dbReference type="Proteomes" id="UP000694727">
    <property type="component" value="Unplaced"/>
</dbReference>
<dbReference type="Proteomes" id="UP000694728">
    <property type="component" value="Unplaced"/>
</dbReference>
<dbReference type="GO" id="GO:0005615">
    <property type="term" value="C:extracellular space"/>
    <property type="evidence" value="ECO:0000318"/>
    <property type="project" value="GO_Central"/>
</dbReference>
<dbReference type="GO" id="GO:0005125">
    <property type="term" value="F:cytokine activity"/>
    <property type="evidence" value="ECO:0007669"/>
    <property type="project" value="InterPro"/>
</dbReference>
<dbReference type="GO" id="GO:0005152">
    <property type="term" value="F:interleukin-1 receptor antagonist activity"/>
    <property type="evidence" value="ECO:0000318"/>
    <property type="project" value="GO_Central"/>
</dbReference>
<dbReference type="GO" id="GO:0005149">
    <property type="term" value="F:interleukin-1 receptor binding"/>
    <property type="evidence" value="ECO:0007669"/>
    <property type="project" value="InterPro"/>
</dbReference>
<dbReference type="GO" id="GO:0006955">
    <property type="term" value="P:immune response"/>
    <property type="evidence" value="ECO:0000318"/>
    <property type="project" value="GO_Central"/>
</dbReference>
<dbReference type="GO" id="GO:0006954">
    <property type="term" value="P:inflammatory response"/>
    <property type="evidence" value="ECO:0000318"/>
    <property type="project" value="GO_Central"/>
</dbReference>
<dbReference type="GO" id="GO:2000660">
    <property type="term" value="P:negative regulation of interleukin-1-mediated signaling pathway"/>
    <property type="evidence" value="ECO:0000318"/>
    <property type="project" value="GO_Central"/>
</dbReference>
<dbReference type="FunFam" id="2.80.10.50:FF:000013">
    <property type="entry name" value="Interleukin-1"/>
    <property type="match status" value="1"/>
</dbReference>
<dbReference type="Gene3D" id="2.80.10.50">
    <property type="match status" value="1"/>
</dbReference>
<dbReference type="InterPro" id="IPR020877">
    <property type="entry name" value="IL-1_CS"/>
</dbReference>
<dbReference type="InterPro" id="IPR000975">
    <property type="entry name" value="IL-1_fam"/>
</dbReference>
<dbReference type="InterPro" id="IPR003297">
    <property type="entry name" value="IL-1RA/IL-36"/>
</dbReference>
<dbReference type="InterPro" id="IPR008996">
    <property type="entry name" value="IL1/FGF"/>
</dbReference>
<dbReference type="PANTHER" id="PTHR10078">
    <property type="entry name" value="INTERLEUKIN-1 FAMILY MEMBER"/>
    <property type="match status" value="1"/>
</dbReference>
<dbReference type="PANTHER" id="PTHR10078:SF28">
    <property type="entry name" value="INTERLEUKIN-1 RECEPTOR ANTAGONIST PROTEIN"/>
    <property type="match status" value="1"/>
</dbReference>
<dbReference type="Pfam" id="PF00340">
    <property type="entry name" value="IL1"/>
    <property type="match status" value="1"/>
</dbReference>
<dbReference type="PRINTS" id="PR00264">
    <property type="entry name" value="INTERLEUKIN1"/>
</dbReference>
<dbReference type="PRINTS" id="PR01360">
    <property type="entry name" value="INTRLEUKIN1X"/>
</dbReference>
<dbReference type="SMART" id="SM00125">
    <property type="entry name" value="IL1"/>
    <property type="match status" value="1"/>
</dbReference>
<dbReference type="SUPFAM" id="SSF50353">
    <property type="entry name" value="Cytokine"/>
    <property type="match status" value="1"/>
</dbReference>
<dbReference type="PROSITE" id="PS00253">
    <property type="entry name" value="INTERLEUKIN_1"/>
    <property type="match status" value="1"/>
</dbReference>
<evidence type="ECO:0000250" key="1"/>
<evidence type="ECO:0000250" key="2">
    <source>
        <dbReference type="UniProtKB" id="P18510"/>
    </source>
</evidence>
<evidence type="ECO:0000250" key="3">
    <source>
        <dbReference type="UniProtKB" id="P25085"/>
    </source>
</evidence>
<evidence type="ECO:0000255" key="4"/>
<evidence type="ECO:0000305" key="5"/>
<proteinExistence type="evidence at transcript level"/>
<keyword id="KW-1015">Disulfide bond</keyword>
<keyword id="KW-0325">Glycoprotein</keyword>
<keyword id="KW-1185">Reference proteome</keyword>
<keyword id="KW-0964">Secreted</keyword>
<keyword id="KW-0732">Signal</keyword>
<reference key="1">
    <citation type="submission" date="1996-05" db="EMBL/GenBank/DDBJ databases">
        <title>Characterization of IRAP in morphine treated pig.</title>
        <authorList>
            <person name="Yin J."/>
            <person name="Murtaugh M.P."/>
        </authorList>
    </citation>
    <scope>NUCLEOTIDE SEQUENCE [MRNA]</scope>
    <source>
        <strain>Crossbred</strain>
        <tissue>Lung</tissue>
    </source>
</reference>
<name>IL1RA_PIG</name>
<accession>Q29056</accession>
<feature type="signal peptide" evidence="1">
    <location>
        <begin position="1"/>
        <end position="25"/>
    </location>
</feature>
<feature type="chain" id="PRO_0000015331" description="Interleukin-1 receptor antagonist protein">
    <location>
        <begin position="26"/>
        <end position="177"/>
    </location>
</feature>
<feature type="glycosylation site" description="N-linked (GlcNAc...) asparagine" evidence="4">
    <location>
        <position position="109"/>
    </location>
</feature>
<feature type="disulfide bond" evidence="1">
    <location>
        <begin position="91"/>
        <end position="141"/>
    </location>
</feature>
<comment type="function">
    <text evidence="3">Anti-inflammatory antagonist of interleukin-1 family of proinflammatory cytokines such as interleukin-1beta/IL1B and interleukin-1alpha/IL1A. Protects from immune dysregulation and uncontrolled systemic inflammation triggered by IL1 for a range of innate stimulatory agents such as pathogens.</text>
</comment>
<comment type="subcellular location">
    <subcellularLocation>
        <location evidence="2">Secreted</location>
    </subcellularLocation>
</comment>
<comment type="similarity">
    <text evidence="5">Belongs to the IL-1 family.</text>
</comment>
<gene>
    <name type="primary">IL1RN</name>
    <name type="synonym">IRAP1</name>
</gene>
<sequence length="177" mass="20093">MEVSRYLCSYLISFLLFLFHSETACHPLGKRPCRMQAFRIWDVNQKTFYLRNNQLVAGYLQGPNTKLEEKIDVVPVEPHFVFLGIHGGKLCLSCVKSGDEMKLQLDAVNITDLRKNSEQDKRFTFIRSDSGPTTSFESAACPGWFLCTALEADQPVGLTNTPKAAVKVTKFYFQQDQ</sequence>
<protein>
    <recommendedName>
        <fullName>Interleukin-1 receptor antagonist protein</fullName>
        <shortName>IL-1RN</shortName>
        <shortName>IL-1ra</shortName>
        <shortName>IRAP</shortName>
    </recommendedName>
    <alternativeName>
        <fullName>IL1 inhibitor</fullName>
    </alternativeName>
</protein>